<dbReference type="EC" id="3.4.21.88" evidence="1"/>
<dbReference type="EMBL" id="CP000680">
    <property type="protein sequence ID" value="ABP84351.1"/>
    <property type="molecule type" value="Genomic_DNA"/>
</dbReference>
<dbReference type="SMR" id="A4XSN5"/>
<dbReference type="STRING" id="399739.Pmen_1587"/>
<dbReference type="MEROPS" id="S24.001"/>
<dbReference type="KEGG" id="pmy:Pmen_1587"/>
<dbReference type="PATRIC" id="fig|399739.8.peg.1609"/>
<dbReference type="eggNOG" id="COG1974">
    <property type="taxonomic scope" value="Bacteria"/>
</dbReference>
<dbReference type="HOGENOM" id="CLU_066192_45_3_6"/>
<dbReference type="OrthoDB" id="9802364at2"/>
<dbReference type="GO" id="GO:0003677">
    <property type="term" value="F:DNA binding"/>
    <property type="evidence" value="ECO:0007669"/>
    <property type="project" value="UniProtKB-UniRule"/>
</dbReference>
<dbReference type="GO" id="GO:0004252">
    <property type="term" value="F:serine-type endopeptidase activity"/>
    <property type="evidence" value="ECO:0007669"/>
    <property type="project" value="UniProtKB-UniRule"/>
</dbReference>
<dbReference type="GO" id="GO:0006281">
    <property type="term" value="P:DNA repair"/>
    <property type="evidence" value="ECO:0007669"/>
    <property type="project" value="UniProtKB-UniRule"/>
</dbReference>
<dbReference type="GO" id="GO:0006260">
    <property type="term" value="P:DNA replication"/>
    <property type="evidence" value="ECO:0007669"/>
    <property type="project" value="UniProtKB-UniRule"/>
</dbReference>
<dbReference type="GO" id="GO:0045892">
    <property type="term" value="P:negative regulation of DNA-templated transcription"/>
    <property type="evidence" value="ECO:0007669"/>
    <property type="project" value="UniProtKB-UniRule"/>
</dbReference>
<dbReference type="GO" id="GO:0006508">
    <property type="term" value="P:proteolysis"/>
    <property type="evidence" value="ECO:0007669"/>
    <property type="project" value="InterPro"/>
</dbReference>
<dbReference type="GO" id="GO:0009432">
    <property type="term" value="P:SOS response"/>
    <property type="evidence" value="ECO:0007669"/>
    <property type="project" value="UniProtKB-UniRule"/>
</dbReference>
<dbReference type="CDD" id="cd06529">
    <property type="entry name" value="S24_LexA-like"/>
    <property type="match status" value="1"/>
</dbReference>
<dbReference type="FunFam" id="1.10.10.10:FF:000009">
    <property type="entry name" value="LexA repressor"/>
    <property type="match status" value="1"/>
</dbReference>
<dbReference type="FunFam" id="2.10.109.10:FF:000001">
    <property type="entry name" value="LexA repressor"/>
    <property type="match status" value="1"/>
</dbReference>
<dbReference type="Gene3D" id="2.10.109.10">
    <property type="entry name" value="Umud Fragment, subunit A"/>
    <property type="match status" value="1"/>
</dbReference>
<dbReference type="Gene3D" id="1.10.10.10">
    <property type="entry name" value="Winged helix-like DNA-binding domain superfamily/Winged helix DNA-binding domain"/>
    <property type="match status" value="1"/>
</dbReference>
<dbReference type="HAMAP" id="MF_00015">
    <property type="entry name" value="LexA"/>
    <property type="match status" value="1"/>
</dbReference>
<dbReference type="InterPro" id="IPR006200">
    <property type="entry name" value="LexA"/>
</dbReference>
<dbReference type="InterPro" id="IPR039418">
    <property type="entry name" value="LexA-like"/>
</dbReference>
<dbReference type="InterPro" id="IPR036286">
    <property type="entry name" value="LexA/Signal_pep-like_sf"/>
</dbReference>
<dbReference type="InterPro" id="IPR006199">
    <property type="entry name" value="LexA_DNA-bd_dom"/>
</dbReference>
<dbReference type="InterPro" id="IPR050077">
    <property type="entry name" value="LexA_repressor"/>
</dbReference>
<dbReference type="InterPro" id="IPR006197">
    <property type="entry name" value="Peptidase_S24_LexA"/>
</dbReference>
<dbReference type="InterPro" id="IPR015927">
    <property type="entry name" value="Peptidase_S24_S26A/B/C"/>
</dbReference>
<dbReference type="InterPro" id="IPR036388">
    <property type="entry name" value="WH-like_DNA-bd_sf"/>
</dbReference>
<dbReference type="InterPro" id="IPR036390">
    <property type="entry name" value="WH_DNA-bd_sf"/>
</dbReference>
<dbReference type="NCBIfam" id="TIGR00498">
    <property type="entry name" value="lexA"/>
    <property type="match status" value="1"/>
</dbReference>
<dbReference type="PANTHER" id="PTHR33516">
    <property type="entry name" value="LEXA REPRESSOR"/>
    <property type="match status" value="1"/>
</dbReference>
<dbReference type="PANTHER" id="PTHR33516:SF2">
    <property type="entry name" value="LEXA REPRESSOR-RELATED"/>
    <property type="match status" value="1"/>
</dbReference>
<dbReference type="Pfam" id="PF01726">
    <property type="entry name" value="LexA_DNA_bind"/>
    <property type="match status" value="1"/>
</dbReference>
<dbReference type="Pfam" id="PF00717">
    <property type="entry name" value="Peptidase_S24"/>
    <property type="match status" value="1"/>
</dbReference>
<dbReference type="PRINTS" id="PR00726">
    <property type="entry name" value="LEXASERPTASE"/>
</dbReference>
<dbReference type="SUPFAM" id="SSF51306">
    <property type="entry name" value="LexA/Signal peptidase"/>
    <property type="match status" value="1"/>
</dbReference>
<dbReference type="SUPFAM" id="SSF46785">
    <property type="entry name" value="Winged helix' DNA-binding domain"/>
    <property type="match status" value="1"/>
</dbReference>
<feature type="chain" id="PRO_1000001319" description="LexA repressor">
    <location>
        <begin position="1"/>
        <end position="204"/>
    </location>
</feature>
<feature type="DNA-binding region" description="H-T-H motif" evidence="1">
    <location>
        <begin position="28"/>
        <end position="48"/>
    </location>
</feature>
<feature type="active site" description="For autocatalytic cleavage activity" evidence="1">
    <location>
        <position position="125"/>
    </location>
</feature>
<feature type="active site" description="For autocatalytic cleavage activity" evidence="1">
    <location>
        <position position="162"/>
    </location>
</feature>
<feature type="site" description="Cleavage; by autolysis" evidence="1">
    <location>
        <begin position="90"/>
        <end position="91"/>
    </location>
</feature>
<gene>
    <name evidence="1" type="primary">lexA</name>
    <name type="ordered locus">Pmen_1587</name>
</gene>
<keyword id="KW-0068">Autocatalytic cleavage</keyword>
<keyword id="KW-0227">DNA damage</keyword>
<keyword id="KW-0234">DNA repair</keyword>
<keyword id="KW-0235">DNA replication</keyword>
<keyword id="KW-0238">DNA-binding</keyword>
<keyword id="KW-0378">Hydrolase</keyword>
<keyword id="KW-0678">Repressor</keyword>
<keyword id="KW-0742">SOS response</keyword>
<keyword id="KW-0804">Transcription</keyword>
<keyword id="KW-0805">Transcription regulation</keyword>
<reference key="1">
    <citation type="submission" date="2007-04" db="EMBL/GenBank/DDBJ databases">
        <title>Complete sequence of Pseudomonas mendocina ymp.</title>
        <authorList>
            <consortium name="US DOE Joint Genome Institute"/>
            <person name="Copeland A."/>
            <person name="Lucas S."/>
            <person name="Lapidus A."/>
            <person name="Barry K."/>
            <person name="Glavina del Rio T."/>
            <person name="Dalin E."/>
            <person name="Tice H."/>
            <person name="Pitluck S."/>
            <person name="Kiss H."/>
            <person name="Brettin T."/>
            <person name="Detter J.C."/>
            <person name="Bruce D."/>
            <person name="Han C."/>
            <person name="Schmutz J."/>
            <person name="Larimer F."/>
            <person name="Land M."/>
            <person name="Hauser L."/>
            <person name="Kyrpides N."/>
            <person name="Mikhailova N."/>
            <person name="Hersman L."/>
            <person name="Dubois J."/>
            <person name="Maurice P."/>
            <person name="Richardson P."/>
        </authorList>
    </citation>
    <scope>NUCLEOTIDE SEQUENCE [LARGE SCALE GENOMIC DNA]</scope>
    <source>
        <strain>ymp</strain>
    </source>
</reference>
<proteinExistence type="inferred from homology"/>
<organism>
    <name type="scientific">Ectopseudomonas mendocina (strain ymp)</name>
    <name type="common">Pseudomonas mendocina</name>
    <dbReference type="NCBI Taxonomy" id="399739"/>
    <lineage>
        <taxon>Bacteria</taxon>
        <taxon>Pseudomonadati</taxon>
        <taxon>Pseudomonadota</taxon>
        <taxon>Gammaproteobacteria</taxon>
        <taxon>Pseudomonadales</taxon>
        <taxon>Pseudomonadaceae</taxon>
        <taxon>Ectopseudomonas</taxon>
    </lineage>
</organism>
<protein>
    <recommendedName>
        <fullName evidence="1">LexA repressor</fullName>
        <ecNumber evidence="1">3.4.21.88</ecNumber>
    </recommendedName>
</protein>
<accession>A4XSN5</accession>
<evidence type="ECO:0000255" key="1">
    <source>
        <dbReference type="HAMAP-Rule" id="MF_00015"/>
    </source>
</evidence>
<comment type="function">
    <text evidence="1">Represses a number of genes involved in the response to DNA damage (SOS response), including recA and lexA. In the presence of single-stranded DNA, RecA interacts with LexA causing an autocatalytic cleavage which disrupts the DNA-binding part of LexA, leading to derepression of the SOS regulon and eventually DNA repair.</text>
</comment>
<comment type="catalytic activity">
    <reaction evidence="1">
        <text>Hydrolysis of Ala-|-Gly bond in repressor LexA.</text>
        <dbReference type="EC" id="3.4.21.88"/>
    </reaction>
</comment>
<comment type="subunit">
    <text evidence="1">Homodimer.</text>
</comment>
<comment type="similarity">
    <text evidence="1">Belongs to the peptidase S24 family.</text>
</comment>
<name>LEXA_ECTM1</name>
<sequence>MLKLTPRQAEILAFIKRCLEDNGYPPTRAEIAQELGFKSPNAAEEHLKALARKGAIEMTPGASRGIRIPGFEPGAANEDEGLPVIGRVAAGAPILAQQHVEESCQINPAFFHPKADYLLRVRGMSMKDIGIFDGDLLAVHTTREARNGQIVVARLDDEVTVKRFKREGNKVWLIAENPEFAPIEVDLEQQDLVIEGLSVGVIRR</sequence>